<gene>
    <name evidence="1" type="primary">rlmH</name>
    <name type="ordered locus">R03164</name>
    <name type="ORF">SMc03781</name>
</gene>
<name>RLMH_RHIME</name>
<evidence type="ECO:0000255" key="1">
    <source>
        <dbReference type="HAMAP-Rule" id="MF_00658"/>
    </source>
</evidence>
<evidence type="ECO:0000305" key="2"/>
<feature type="chain" id="PRO_0000198168" description="Ribosomal RNA large subunit methyltransferase H">
    <location>
        <begin position="1"/>
        <end position="160"/>
    </location>
</feature>
<feature type="binding site" evidence="1">
    <location>
        <position position="76"/>
    </location>
    <ligand>
        <name>S-adenosyl-L-methionine</name>
        <dbReference type="ChEBI" id="CHEBI:59789"/>
    </ligand>
</feature>
<feature type="binding site" evidence="1">
    <location>
        <position position="108"/>
    </location>
    <ligand>
        <name>S-adenosyl-L-methionine</name>
        <dbReference type="ChEBI" id="CHEBI:59789"/>
    </ligand>
</feature>
<feature type="binding site" evidence="1">
    <location>
        <begin position="127"/>
        <end position="132"/>
    </location>
    <ligand>
        <name>S-adenosyl-L-methionine</name>
        <dbReference type="ChEBI" id="CHEBI:59789"/>
    </ligand>
</feature>
<dbReference type="EC" id="2.1.1.177" evidence="1"/>
<dbReference type="EMBL" id="AL591688">
    <property type="protein sequence ID" value="CAC47743.1"/>
    <property type="status" value="ALT_INIT"/>
    <property type="molecule type" value="Genomic_DNA"/>
</dbReference>
<dbReference type="RefSeq" id="NP_387270.2">
    <property type="nucleotide sequence ID" value="NC_003047.1"/>
</dbReference>
<dbReference type="RefSeq" id="WP_003531239.1">
    <property type="nucleotide sequence ID" value="NC_003047.1"/>
</dbReference>
<dbReference type="SMR" id="Q92LB0"/>
<dbReference type="EnsemblBacteria" id="CAC47743">
    <property type="protein sequence ID" value="CAC47743"/>
    <property type="gene ID" value="SMc03781"/>
</dbReference>
<dbReference type="KEGG" id="sme:SMc03781"/>
<dbReference type="PATRIC" id="fig|266834.11.peg.4713"/>
<dbReference type="eggNOG" id="COG1576">
    <property type="taxonomic scope" value="Bacteria"/>
</dbReference>
<dbReference type="HOGENOM" id="CLU_100552_1_1_5"/>
<dbReference type="OrthoDB" id="9806643at2"/>
<dbReference type="Proteomes" id="UP000001976">
    <property type="component" value="Chromosome"/>
</dbReference>
<dbReference type="GO" id="GO:0005737">
    <property type="term" value="C:cytoplasm"/>
    <property type="evidence" value="ECO:0007669"/>
    <property type="project" value="UniProtKB-SubCell"/>
</dbReference>
<dbReference type="GO" id="GO:0070038">
    <property type="term" value="F:rRNA (pseudouridine-N3-)-methyltransferase activity"/>
    <property type="evidence" value="ECO:0007669"/>
    <property type="project" value="UniProtKB-UniRule"/>
</dbReference>
<dbReference type="CDD" id="cd18081">
    <property type="entry name" value="RlmH-like"/>
    <property type="match status" value="1"/>
</dbReference>
<dbReference type="Gene3D" id="3.40.1280.10">
    <property type="match status" value="1"/>
</dbReference>
<dbReference type="HAMAP" id="MF_00658">
    <property type="entry name" value="23SrRNA_methyltr_H"/>
    <property type="match status" value="1"/>
</dbReference>
<dbReference type="InterPro" id="IPR029028">
    <property type="entry name" value="Alpha/beta_knot_MTases"/>
</dbReference>
<dbReference type="InterPro" id="IPR003742">
    <property type="entry name" value="RlmH-like"/>
</dbReference>
<dbReference type="InterPro" id="IPR029026">
    <property type="entry name" value="tRNA_m1G_MTases_N"/>
</dbReference>
<dbReference type="NCBIfam" id="NF000989">
    <property type="entry name" value="PRK00103.2-3"/>
    <property type="match status" value="1"/>
</dbReference>
<dbReference type="PANTHER" id="PTHR33603">
    <property type="entry name" value="METHYLTRANSFERASE"/>
    <property type="match status" value="1"/>
</dbReference>
<dbReference type="PANTHER" id="PTHR33603:SF1">
    <property type="entry name" value="RIBOSOMAL RNA LARGE SUBUNIT METHYLTRANSFERASE H"/>
    <property type="match status" value="1"/>
</dbReference>
<dbReference type="Pfam" id="PF02590">
    <property type="entry name" value="SPOUT_MTase"/>
    <property type="match status" value="1"/>
</dbReference>
<dbReference type="PIRSF" id="PIRSF004505">
    <property type="entry name" value="MT_bac"/>
    <property type="match status" value="1"/>
</dbReference>
<dbReference type="SUPFAM" id="SSF75217">
    <property type="entry name" value="alpha/beta knot"/>
    <property type="match status" value="1"/>
</dbReference>
<reference key="1">
    <citation type="journal article" date="2001" name="Proc. Natl. Acad. Sci. U.S.A.">
        <title>Analysis of the chromosome sequence of the legume symbiont Sinorhizobium meliloti strain 1021.</title>
        <authorList>
            <person name="Capela D."/>
            <person name="Barloy-Hubler F."/>
            <person name="Gouzy J."/>
            <person name="Bothe G."/>
            <person name="Ampe F."/>
            <person name="Batut J."/>
            <person name="Boistard P."/>
            <person name="Becker A."/>
            <person name="Boutry M."/>
            <person name="Cadieu E."/>
            <person name="Dreano S."/>
            <person name="Gloux S."/>
            <person name="Godrie T."/>
            <person name="Goffeau A."/>
            <person name="Kahn D."/>
            <person name="Kiss E."/>
            <person name="Lelaure V."/>
            <person name="Masuy D."/>
            <person name="Pohl T."/>
            <person name="Portetelle D."/>
            <person name="Puehler A."/>
            <person name="Purnelle B."/>
            <person name="Ramsperger U."/>
            <person name="Renard C."/>
            <person name="Thebault P."/>
            <person name="Vandenbol M."/>
            <person name="Weidner S."/>
            <person name="Galibert F."/>
        </authorList>
    </citation>
    <scope>NUCLEOTIDE SEQUENCE [LARGE SCALE GENOMIC DNA]</scope>
    <source>
        <strain>1021</strain>
    </source>
</reference>
<reference key="2">
    <citation type="journal article" date="2001" name="Science">
        <title>The composite genome of the legume symbiont Sinorhizobium meliloti.</title>
        <authorList>
            <person name="Galibert F."/>
            <person name="Finan T.M."/>
            <person name="Long S.R."/>
            <person name="Puehler A."/>
            <person name="Abola P."/>
            <person name="Ampe F."/>
            <person name="Barloy-Hubler F."/>
            <person name="Barnett M.J."/>
            <person name="Becker A."/>
            <person name="Boistard P."/>
            <person name="Bothe G."/>
            <person name="Boutry M."/>
            <person name="Bowser L."/>
            <person name="Buhrmester J."/>
            <person name="Cadieu E."/>
            <person name="Capela D."/>
            <person name="Chain P."/>
            <person name="Cowie A."/>
            <person name="Davis R.W."/>
            <person name="Dreano S."/>
            <person name="Federspiel N.A."/>
            <person name="Fisher R.F."/>
            <person name="Gloux S."/>
            <person name="Godrie T."/>
            <person name="Goffeau A."/>
            <person name="Golding B."/>
            <person name="Gouzy J."/>
            <person name="Gurjal M."/>
            <person name="Hernandez-Lucas I."/>
            <person name="Hong A."/>
            <person name="Huizar L."/>
            <person name="Hyman R.W."/>
            <person name="Jones T."/>
            <person name="Kahn D."/>
            <person name="Kahn M.L."/>
            <person name="Kalman S."/>
            <person name="Keating D.H."/>
            <person name="Kiss E."/>
            <person name="Komp C."/>
            <person name="Lelaure V."/>
            <person name="Masuy D."/>
            <person name="Palm C."/>
            <person name="Peck M.C."/>
            <person name="Pohl T.M."/>
            <person name="Portetelle D."/>
            <person name="Purnelle B."/>
            <person name="Ramsperger U."/>
            <person name="Surzycki R."/>
            <person name="Thebault P."/>
            <person name="Vandenbol M."/>
            <person name="Vorhoelter F.J."/>
            <person name="Weidner S."/>
            <person name="Wells D.H."/>
            <person name="Wong K."/>
            <person name="Yeh K.-C."/>
            <person name="Batut J."/>
        </authorList>
    </citation>
    <scope>NUCLEOTIDE SEQUENCE [LARGE SCALE GENOMIC DNA]</scope>
    <source>
        <strain>1021</strain>
    </source>
</reference>
<protein>
    <recommendedName>
        <fullName evidence="1">Ribosomal RNA large subunit methyltransferase H</fullName>
        <ecNumber evidence="1">2.1.1.177</ecNumber>
    </recommendedName>
    <alternativeName>
        <fullName evidence="1">23S rRNA (pseudouridine1915-N3)-methyltransferase</fullName>
    </alternativeName>
    <alternativeName>
        <fullName evidence="1">23S rRNA m3Psi1915 methyltransferase</fullName>
    </alternativeName>
    <alternativeName>
        <fullName evidence="1">rRNA (pseudouridine-N3-)-methyltransferase RlmH</fullName>
    </alternativeName>
</protein>
<accession>Q92LB0</accession>
<keyword id="KW-0963">Cytoplasm</keyword>
<keyword id="KW-0489">Methyltransferase</keyword>
<keyword id="KW-1185">Reference proteome</keyword>
<keyword id="KW-0698">rRNA processing</keyword>
<keyword id="KW-0949">S-adenosyl-L-methionine</keyword>
<keyword id="KW-0808">Transferase</keyword>
<comment type="function">
    <text evidence="1">Specifically methylates the pseudouridine at position 1915 (m3Psi1915) in 23S rRNA.</text>
</comment>
<comment type="catalytic activity">
    <reaction evidence="1">
        <text>pseudouridine(1915) in 23S rRNA + S-adenosyl-L-methionine = N(3)-methylpseudouridine(1915) in 23S rRNA + S-adenosyl-L-homocysteine + H(+)</text>
        <dbReference type="Rhea" id="RHEA:42752"/>
        <dbReference type="Rhea" id="RHEA-COMP:10221"/>
        <dbReference type="Rhea" id="RHEA-COMP:10222"/>
        <dbReference type="ChEBI" id="CHEBI:15378"/>
        <dbReference type="ChEBI" id="CHEBI:57856"/>
        <dbReference type="ChEBI" id="CHEBI:59789"/>
        <dbReference type="ChEBI" id="CHEBI:65314"/>
        <dbReference type="ChEBI" id="CHEBI:74486"/>
        <dbReference type="EC" id="2.1.1.177"/>
    </reaction>
</comment>
<comment type="subunit">
    <text evidence="1">Homodimer.</text>
</comment>
<comment type="subcellular location">
    <subcellularLocation>
        <location evidence="1">Cytoplasm</location>
    </subcellularLocation>
</comment>
<comment type="similarity">
    <text evidence="1">Belongs to the RNA methyltransferase RlmH family.</text>
</comment>
<comment type="sequence caution" evidence="2">
    <conflict type="erroneous initiation">
        <sequence resource="EMBL-CDS" id="CAC47743"/>
    </conflict>
</comment>
<sequence length="160" mass="17274">MRIGLFAVGRLKAGPEKDLAGRYLDRFAKAGPAVGLELARVVETAESRAANAETRKREEAGQLEKALADGSLLVLLDERGKALDSEAFARLLGTLRDSGKRDLMIAIGGADGLDPALHARADAVLNLGKMTWPHQLVRILIAEQLYRAVTILSGHPYHRA</sequence>
<proteinExistence type="inferred from homology"/>
<organism>
    <name type="scientific">Rhizobium meliloti (strain 1021)</name>
    <name type="common">Ensifer meliloti</name>
    <name type="synonym">Sinorhizobium meliloti</name>
    <dbReference type="NCBI Taxonomy" id="266834"/>
    <lineage>
        <taxon>Bacteria</taxon>
        <taxon>Pseudomonadati</taxon>
        <taxon>Pseudomonadota</taxon>
        <taxon>Alphaproteobacteria</taxon>
        <taxon>Hyphomicrobiales</taxon>
        <taxon>Rhizobiaceae</taxon>
        <taxon>Sinorhizobium/Ensifer group</taxon>
        <taxon>Sinorhizobium</taxon>
    </lineage>
</organism>